<evidence type="ECO:0000255" key="1">
    <source>
        <dbReference type="HAMAP-Rule" id="MF_01379"/>
    </source>
</evidence>
<evidence type="ECO:0000305" key="2"/>
<sequence length="360" mass="39697">MTTTLQQRGSASLWEKFCQWITSTENRIYVGWFGVLMIPTLLTATTCFIIAFIAAPPVDIDGIREPVAGSLLYGNNIVSGAVVPSSNAIGLHFYPIWEAASLDEWLYNGGPYQLVIFHFLIGVFCYMGREWELSYRLGMRPWICVAFSAPVAAATAVFLIYPIGQGSFSDGMPLGISGTFNFMIVFQAEHNILMHPFHMLGVAGVFGGSLFSAMHGSLVTSSLVRETTETESQNYGYKFGQEEETYNIVAAHGYFGRLIFQYASFNNSRSLHFFLGAWPVVGIWFTALGVSTMAFNLNGFNFNQSILDSQGRVINTWADILNRANLGFEVMHERNAHNFPLDLAAGEQAPVALQAPAING</sequence>
<dbReference type="EC" id="1.10.3.9" evidence="1"/>
<dbReference type="EMBL" id="CP000951">
    <property type="protein sequence ID" value="ACA99409.1"/>
    <property type="molecule type" value="Genomic_DNA"/>
</dbReference>
<dbReference type="SMR" id="B1XMC3"/>
<dbReference type="STRING" id="32049.SYNPCC7002_A1418"/>
<dbReference type="KEGG" id="syp:SYNPCC7002_A1418"/>
<dbReference type="eggNOG" id="ENOG502Z87P">
    <property type="taxonomic scope" value="Bacteria"/>
</dbReference>
<dbReference type="HOGENOM" id="CLU_054206_1_0_3"/>
<dbReference type="Proteomes" id="UP000001688">
    <property type="component" value="Chromosome"/>
</dbReference>
<dbReference type="GO" id="GO:0009523">
    <property type="term" value="C:photosystem II"/>
    <property type="evidence" value="ECO:0007669"/>
    <property type="project" value="UniProtKB-KW"/>
</dbReference>
<dbReference type="GO" id="GO:0031676">
    <property type="term" value="C:plasma membrane-derived thylakoid membrane"/>
    <property type="evidence" value="ECO:0007669"/>
    <property type="project" value="UniProtKB-SubCell"/>
</dbReference>
<dbReference type="GO" id="GO:0016168">
    <property type="term" value="F:chlorophyll binding"/>
    <property type="evidence" value="ECO:0007669"/>
    <property type="project" value="UniProtKB-UniRule"/>
</dbReference>
<dbReference type="GO" id="GO:0045156">
    <property type="term" value="F:electron transporter, transferring electrons within the cyclic electron transport pathway of photosynthesis activity"/>
    <property type="evidence" value="ECO:0007669"/>
    <property type="project" value="InterPro"/>
</dbReference>
<dbReference type="GO" id="GO:0005506">
    <property type="term" value="F:iron ion binding"/>
    <property type="evidence" value="ECO:0007669"/>
    <property type="project" value="UniProtKB-UniRule"/>
</dbReference>
<dbReference type="GO" id="GO:0016682">
    <property type="term" value="F:oxidoreductase activity, acting on diphenols and related substances as donors, oxygen as acceptor"/>
    <property type="evidence" value="ECO:0007669"/>
    <property type="project" value="UniProtKB-UniRule"/>
</dbReference>
<dbReference type="GO" id="GO:0010242">
    <property type="term" value="F:oxygen evolving activity"/>
    <property type="evidence" value="ECO:0007669"/>
    <property type="project" value="UniProtKB-EC"/>
</dbReference>
<dbReference type="GO" id="GO:0009772">
    <property type="term" value="P:photosynthetic electron transport in photosystem II"/>
    <property type="evidence" value="ECO:0007669"/>
    <property type="project" value="InterPro"/>
</dbReference>
<dbReference type="GO" id="GO:0009635">
    <property type="term" value="P:response to herbicide"/>
    <property type="evidence" value="ECO:0007669"/>
    <property type="project" value="UniProtKB-KW"/>
</dbReference>
<dbReference type="CDD" id="cd09289">
    <property type="entry name" value="Photosystem-II_D1"/>
    <property type="match status" value="1"/>
</dbReference>
<dbReference type="FunFam" id="1.20.85.10:FF:000002">
    <property type="entry name" value="Photosystem II protein D1"/>
    <property type="match status" value="1"/>
</dbReference>
<dbReference type="Gene3D" id="1.20.85.10">
    <property type="entry name" value="Photosystem II protein D1-like"/>
    <property type="match status" value="1"/>
</dbReference>
<dbReference type="HAMAP" id="MF_01379">
    <property type="entry name" value="PSII_PsbA_D1"/>
    <property type="match status" value="1"/>
</dbReference>
<dbReference type="InterPro" id="IPR055266">
    <property type="entry name" value="D1/D2"/>
</dbReference>
<dbReference type="InterPro" id="IPR036854">
    <property type="entry name" value="Photo_II_D1/D2_sf"/>
</dbReference>
<dbReference type="InterPro" id="IPR000484">
    <property type="entry name" value="Photo_RC_L/M"/>
</dbReference>
<dbReference type="InterPro" id="IPR055265">
    <property type="entry name" value="Photo_RC_L/M_CS"/>
</dbReference>
<dbReference type="InterPro" id="IPR005867">
    <property type="entry name" value="PSII_D1"/>
</dbReference>
<dbReference type="NCBIfam" id="TIGR01151">
    <property type="entry name" value="psbA"/>
    <property type="match status" value="1"/>
</dbReference>
<dbReference type="PANTHER" id="PTHR33149:SF12">
    <property type="entry name" value="PHOTOSYSTEM II D2 PROTEIN"/>
    <property type="match status" value="1"/>
</dbReference>
<dbReference type="PANTHER" id="PTHR33149">
    <property type="entry name" value="PHOTOSYSTEM II PROTEIN D1"/>
    <property type="match status" value="1"/>
</dbReference>
<dbReference type="Pfam" id="PF00124">
    <property type="entry name" value="Photo_RC"/>
    <property type="match status" value="1"/>
</dbReference>
<dbReference type="PRINTS" id="PR00256">
    <property type="entry name" value="REACTNCENTRE"/>
</dbReference>
<dbReference type="SUPFAM" id="SSF81483">
    <property type="entry name" value="Bacterial photosystem II reaction centre, L and M subunits"/>
    <property type="match status" value="1"/>
</dbReference>
<dbReference type="PROSITE" id="PS00244">
    <property type="entry name" value="REACTION_CENTER"/>
    <property type="match status" value="1"/>
</dbReference>
<organism>
    <name type="scientific">Picosynechococcus sp. (strain ATCC 27264 / PCC 7002 / PR-6)</name>
    <name type="common">Agmenellum quadruplicatum</name>
    <dbReference type="NCBI Taxonomy" id="32049"/>
    <lineage>
        <taxon>Bacteria</taxon>
        <taxon>Bacillati</taxon>
        <taxon>Cyanobacteriota</taxon>
        <taxon>Cyanophyceae</taxon>
        <taxon>Oscillatoriophycideae</taxon>
        <taxon>Chroococcales</taxon>
        <taxon>Geminocystaceae</taxon>
        <taxon>Picosynechococcus</taxon>
    </lineage>
</organism>
<accession>B1XMC3</accession>
<proteinExistence type="inferred from homology"/>
<name>PSBA2_PICP2</name>
<feature type="chain" id="PRO_0000339932" description="Photosystem II protein D1 2" evidence="1">
    <location>
        <begin position="1"/>
        <end position="344"/>
    </location>
</feature>
<feature type="propeptide" id="PRO_0000339933" evidence="1">
    <location>
        <begin position="345"/>
        <end position="360"/>
    </location>
</feature>
<feature type="transmembrane region" description="Helical" evidence="1">
    <location>
        <begin position="29"/>
        <end position="46"/>
    </location>
</feature>
<feature type="transmembrane region" description="Helical" evidence="1">
    <location>
        <begin position="118"/>
        <end position="133"/>
    </location>
</feature>
<feature type="transmembrane region" description="Helical" evidence="1">
    <location>
        <begin position="142"/>
        <end position="156"/>
    </location>
</feature>
<feature type="transmembrane region" description="Helical" evidence="1">
    <location>
        <begin position="197"/>
        <end position="218"/>
    </location>
</feature>
<feature type="transmembrane region" description="Helical" evidence="1">
    <location>
        <begin position="274"/>
        <end position="288"/>
    </location>
</feature>
<feature type="binding site" description="axial binding residue" evidence="1">
    <location>
        <position position="118"/>
    </location>
    <ligand>
        <name>chlorophyll a</name>
        <dbReference type="ChEBI" id="CHEBI:58416"/>
        <label>ChlzD1</label>
    </ligand>
    <ligandPart>
        <name>Mg</name>
        <dbReference type="ChEBI" id="CHEBI:25107"/>
    </ligandPart>
</feature>
<feature type="binding site" evidence="1">
    <location>
        <position position="126"/>
    </location>
    <ligand>
        <name>pheophytin a</name>
        <dbReference type="ChEBI" id="CHEBI:136840"/>
        <label>D1</label>
    </ligand>
</feature>
<feature type="binding site" evidence="1">
    <location>
        <position position="170"/>
    </location>
    <ligand>
        <name>[CaMn4O5] cluster</name>
        <dbReference type="ChEBI" id="CHEBI:189552"/>
    </ligand>
</feature>
<feature type="binding site" evidence="1">
    <location>
        <position position="189"/>
    </location>
    <ligand>
        <name>[CaMn4O5] cluster</name>
        <dbReference type="ChEBI" id="CHEBI:189552"/>
    </ligand>
</feature>
<feature type="binding site" description="axial binding residue" evidence="1">
    <location>
        <position position="198"/>
    </location>
    <ligand>
        <name>chlorophyll a</name>
        <dbReference type="ChEBI" id="CHEBI:58416"/>
        <label>PD1</label>
    </ligand>
    <ligandPart>
        <name>Mg</name>
        <dbReference type="ChEBI" id="CHEBI:25107"/>
    </ligandPart>
</feature>
<feature type="binding site" evidence="1">
    <location>
        <position position="215"/>
    </location>
    <ligand>
        <name>a quinone</name>
        <dbReference type="ChEBI" id="CHEBI:132124"/>
        <label>B</label>
    </ligand>
</feature>
<feature type="binding site" evidence="1">
    <location>
        <position position="215"/>
    </location>
    <ligand>
        <name>Fe cation</name>
        <dbReference type="ChEBI" id="CHEBI:24875"/>
        <note>ligand shared with heterodimeric partner</note>
    </ligand>
</feature>
<feature type="binding site" evidence="1">
    <location>
        <begin position="264"/>
        <end position="265"/>
    </location>
    <ligand>
        <name>a quinone</name>
        <dbReference type="ChEBI" id="CHEBI:132124"/>
        <label>B</label>
    </ligand>
</feature>
<feature type="binding site" evidence="1">
    <location>
        <position position="272"/>
    </location>
    <ligand>
        <name>Fe cation</name>
        <dbReference type="ChEBI" id="CHEBI:24875"/>
        <note>ligand shared with heterodimeric partner</note>
    </ligand>
</feature>
<feature type="binding site" evidence="1">
    <location>
        <position position="332"/>
    </location>
    <ligand>
        <name>[CaMn4O5] cluster</name>
        <dbReference type="ChEBI" id="CHEBI:189552"/>
    </ligand>
</feature>
<feature type="binding site" evidence="1">
    <location>
        <position position="333"/>
    </location>
    <ligand>
        <name>[CaMn4O5] cluster</name>
        <dbReference type="ChEBI" id="CHEBI:189552"/>
    </ligand>
</feature>
<feature type="binding site" evidence="1">
    <location>
        <position position="342"/>
    </location>
    <ligand>
        <name>[CaMn4O5] cluster</name>
        <dbReference type="ChEBI" id="CHEBI:189552"/>
    </ligand>
</feature>
<feature type="binding site" evidence="1">
    <location>
        <position position="344"/>
    </location>
    <ligand>
        <name>[CaMn4O5] cluster</name>
        <dbReference type="ChEBI" id="CHEBI:189552"/>
    </ligand>
</feature>
<feature type="site" description="Tyrosine radical intermediate" evidence="1">
    <location>
        <position position="161"/>
    </location>
</feature>
<feature type="site" description="Stabilizes free radical intermediate" evidence="1">
    <location>
        <position position="190"/>
    </location>
</feature>
<feature type="site" description="Cleavage; by CtpA" evidence="1">
    <location>
        <begin position="344"/>
        <end position="345"/>
    </location>
</feature>
<reference key="1">
    <citation type="submission" date="2008-02" db="EMBL/GenBank/DDBJ databases">
        <title>Complete sequence of Synechococcus sp. PCC 7002.</title>
        <authorList>
            <person name="Li T."/>
            <person name="Zhao J."/>
            <person name="Zhao C."/>
            <person name="Liu Z."/>
            <person name="Zhao F."/>
            <person name="Marquardt J."/>
            <person name="Nomura C.T."/>
            <person name="Persson S."/>
            <person name="Detter J.C."/>
            <person name="Richardson P.M."/>
            <person name="Lanz C."/>
            <person name="Schuster S.C."/>
            <person name="Wang J."/>
            <person name="Li S."/>
            <person name="Huang X."/>
            <person name="Cai T."/>
            <person name="Yu Z."/>
            <person name="Luo J."/>
            <person name="Zhao J."/>
            <person name="Bryant D.A."/>
        </authorList>
    </citation>
    <scope>NUCLEOTIDE SEQUENCE [LARGE SCALE GENOMIC DNA]</scope>
    <source>
        <strain>ATCC 27264 / PCC 7002 / PR-6</strain>
    </source>
</reference>
<gene>
    <name evidence="1 2" type="primary">psbA2</name>
    <name type="ordered locus">SYNPCC7002_A1418</name>
</gene>
<keyword id="KW-0106">Calcium</keyword>
<keyword id="KW-0148">Chlorophyll</keyword>
<keyword id="KW-0157">Chromophore</keyword>
<keyword id="KW-0249">Electron transport</keyword>
<keyword id="KW-0359">Herbicide resistance</keyword>
<keyword id="KW-0408">Iron</keyword>
<keyword id="KW-0460">Magnesium</keyword>
<keyword id="KW-0464">Manganese</keyword>
<keyword id="KW-0472">Membrane</keyword>
<keyword id="KW-0479">Metal-binding</keyword>
<keyword id="KW-0560">Oxidoreductase</keyword>
<keyword id="KW-0602">Photosynthesis</keyword>
<keyword id="KW-0604">Photosystem II</keyword>
<keyword id="KW-1185">Reference proteome</keyword>
<keyword id="KW-0793">Thylakoid</keyword>
<keyword id="KW-0812">Transmembrane</keyword>
<keyword id="KW-1133">Transmembrane helix</keyword>
<keyword id="KW-0813">Transport</keyword>
<comment type="function">
    <text evidence="1">Photosystem II (PSII) is a light-driven water:plastoquinone oxidoreductase that uses light energy to abstract electrons from H(2)O, generating O(2) and a proton gradient subsequently used for ATP formation. It consists of a core antenna complex that captures photons, and an electron transfer chain that converts photonic excitation into a charge separation. The D1/D2 (PsbA/PsbD) reaction center heterodimer binds P680, the primary electron donor of PSII as well as several subsequent electron acceptors.</text>
</comment>
<comment type="catalytic activity">
    <reaction evidence="1">
        <text>2 a plastoquinone + 4 hnu + 2 H2O = 2 a plastoquinol + O2</text>
        <dbReference type="Rhea" id="RHEA:36359"/>
        <dbReference type="Rhea" id="RHEA-COMP:9561"/>
        <dbReference type="Rhea" id="RHEA-COMP:9562"/>
        <dbReference type="ChEBI" id="CHEBI:15377"/>
        <dbReference type="ChEBI" id="CHEBI:15379"/>
        <dbReference type="ChEBI" id="CHEBI:17757"/>
        <dbReference type="ChEBI" id="CHEBI:30212"/>
        <dbReference type="ChEBI" id="CHEBI:62192"/>
        <dbReference type="EC" id="1.10.3.9"/>
    </reaction>
</comment>
<comment type="cofactor">
    <text evidence="1">The D1/D2 heterodimer binds P680, chlorophylls that are the primary electron donor of PSII, and subsequent electron acceptors. It shares a non-heme iron and each subunit binds pheophytin, quinone, additional chlorophylls, carotenoids and lipids. D1 provides most of the ligands for the Mn4-Ca-O5 cluster of the oxygen-evolving complex (OEC). There is also a Cl(-1) ion associated with D1 and D2, which is required for oxygen evolution. The PSII complex binds additional chlorophylls, carotenoids and specific lipids.</text>
</comment>
<comment type="subunit">
    <text evidence="1">PSII is composed of 1 copy each of membrane proteins PsbA, PsbB, PsbC, PsbD, PsbE, PsbF, PsbH, PsbI, PsbJ, PsbK, PsbL, PsbM, PsbT, PsbX, PsbY, PsbZ, Psb30/Ycf12, peripheral proteins PsbO, CyanoQ (PsbQ), PsbU, PsbV and a large number of cofactors. It forms dimeric complexes.</text>
</comment>
<comment type="subcellular location">
    <subcellularLocation>
        <location evidence="1">Cellular thylakoid membrane</location>
        <topology evidence="1">Multi-pass membrane protein</topology>
    </subcellularLocation>
</comment>
<comment type="PTM">
    <text evidence="1">Tyr-161 forms a radical intermediate that is referred to as redox-active TyrZ, YZ or Y-Z.</text>
</comment>
<comment type="PTM">
    <text evidence="1">C-terminally processed by CtpA; processing is essential to allow assembly of the oxygen-evolving complex and thus photosynthetic growth.</text>
</comment>
<comment type="miscellaneous">
    <text evidence="1">Cyanobacteria usually contain more than 2 copies of the psbA gene.</text>
</comment>
<comment type="miscellaneous">
    <text evidence="1">2 of the reaction center chlorophylls (ChlD1 and ChlD2) are entirely coordinated by water.</text>
</comment>
<comment type="miscellaneous">
    <text evidence="1">Herbicides such as atrazine, BNT, diuron or ioxynil bind in the Q(B) binding site and block subsequent electron transfer.</text>
</comment>
<comment type="similarity">
    <text evidence="1">Belongs to the reaction center PufL/M/PsbA/D family.</text>
</comment>
<protein>
    <recommendedName>
        <fullName evidence="1">Photosystem II protein D1 2</fullName>
        <shortName evidence="1">PSII D1 protein 2</shortName>
        <ecNumber evidence="1">1.10.3.9</ecNumber>
    </recommendedName>
    <alternativeName>
        <fullName evidence="1">Photosystem II Q(B) protein 2</fullName>
    </alternativeName>
</protein>